<gene>
    <name type="primary">VAC14</name>
    <name type="ordered locus">At2g01690</name>
    <name type="ORF">T8O11.14</name>
</gene>
<accession>Q9ZU97</accession>
<accession>Q0WVB5</accession>
<accession>Q8RXM7</accession>
<comment type="function">
    <text evidence="1">The PI(3,5)P2 regulatory complex regulates both the synthesis and turnover of phosphatidylinositol 3,5-bisphosphate (PtdIns(3,5)P2). Regulates the synthesis of PtdIns(3,5)P2 by positive activation of FAB1 and by controlling SAC/FIG4 localization (By similarity).</text>
</comment>
<comment type="subunit">
    <text evidence="1">Component of the PI(3,5)P2 regulatory complex at least composed of ATG18, SAC/FIG4, FAB1 and VAC14. VAC14 nucleates the assembly of the complex and serves as a scaffold (By similarity).</text>
</comment>
<comment type="subcellular location">
    <subcellularLocation>
        <location evidence="1">Cytoplasm</location>
    </subcellularLocation>
    <subcellularLocation>
        <location evidence="1">Vacuole membrane</location>
        <topology evidence="1">Peripheral membrane protein</topology>
    </subcellularLocation>
</comment>
<comment type="alternative products">
    <event type="alternative splicing"/>
    <isoform>
        <id>Q9ZU97-1</id>
        <name>1</name>
        <sequence type="displayed"/>
    </isoform>
    <text>A number of isoforms are produced. According to EST sequences.</text>
</comment>
<comment type="similarity">
    <text evidence="3">Belongs to the VAC14 family.</text>
</comment>
<name>VAC14_ARATH</name>
<sequence length="743" mass="83912">MSDALSAIPAAVHRNLSDKLYEKRKNAALELENIVKNLTSSGDHDKISKVIEMLIKEFAKSPQANHRKGGLIGLAAVTVGLSTEAAQYLEQIVPPVINSFSDQDSRVRYYACEALYNIAKVVRGDFIIFFNKIFDALCKLSADSDANVQSAAHLLDRLVKDIVTESDQFSIEEFIPLLKERMNVLNPYVRQFLVGWITVLDSVPDIDMLGFLPDFLDGLFNMLSDSSHEIRQQADSALSEFLQEIKNSPSVDYGRMAEILVQRAASPDEFTRLTAITWINEFVKLGGDQLVRYYADILGAILPCISDKEEKIRVVARETNEELRSIHVEPSDGFDVGAILSVARRQLSSEFEATRIEALNWISTLLNKHRTEVLCFLNDIFDTLLKALSDSSDDVVLLVLEVHAGVAKDPQHFRQLIVFLVHNFRADNSLLERRGALIVRRMCVLLDAERVYRELSTILEGEDNLDFASTMVQALNLILLTSPELSKLRELLKGSLVNREGKELFVALYTSWCHSPMAIISLCLLAQAYQHASVVIQSLVEEDINVKFLVQLDKLIRLLETPIFTYLRLQLLEPGRYTWLLKTLYGLLMLLPQQSAAFKILRTRLKTVPTYSFSTGNQIGRATSGVPFSQYKHQNEDGDLEDDNINSSHQGINFAVRLQQFENVQNLHRGQARTRVNYSYHSSSSSTSKEVRRSEEQQQQQQQQQQQQQQQQRPPPSSTSSSVADNNRPPSRTSRKGPGQLQL</sequence>
<evidence type="ECO:0000250" key="1"/>
<evidence type="ECO:0000256" key="2">
    <source>
        <dbReference type="SAM" id="MobiDB-lite"/>
    </source>
</evidence>
<evidence type="ECO:0000305" key="3"/>
<reference key="1">
    <citation type="journal article" date="1999" name="Nature">
        <title>Sequence and analysis of chromosome 2 of the plant Arabidopsis thaliana.</title>
        <authorList>
            <person name="Lin X."/>
            <person name="Kaul S."/>
            <person name="Rounsley S.D."/>
            <person name="Shea T.P."/>
            <person name="Benito M.-I."/>
            <person name="Town C.D."/>
            <person name="Fujii C.Y."/>
            <person name="Mason T.M."/>
            <person name="Bowman C.L."/>
            <person name="Barnstead M.E."/>
            <person name="Feldblyum T.V."/>
            <person name="Buell C.R."/>
            <person name="Ketchum K.A."/>
            <person name="Lee J.J."/>
            <person name="Ronning C.M."/>
            <person name="Koo H.L."/>
            <person name="Moffat K.S."/>
            <person name="Cronin L.A."/>
            <person name="Shen M."/>
            <person name="Pai G."/>
            <person name="Van Aken S."/>
            <person name="Umayam L."/>
            <person name="Tallon L.J."/>
            <person name="Gill J.E."/>
            <person name="Adams M.D."/>
            <person name="Carrera A.J."/>
            <person name="Creasy T.H."/>
            <person name="Goodman H.M."/>
            <person name="Somerville C.R."/>
            <person name="Copenhaver G.P."/>
            <person name="Preuss D."/>
            <person name="Nierman W.C."/>
            <person name="White O."/>
            <person name="Eisen J.A."/>
            <person name="Salzberg S.L."/>
            <person name="Fraser C.M."/>
            <person name="Venter J.C."/>
        </authorList>
    </citation>
    <scope>NUCLEOTIDE SEQUENCE [LARGE SCALE GENOMIC DNA]</scope>
    <source>
        <strain>cv. Columbia</strain>
    </source>
</reference>
<reference key="2">
    <citation type="journal article" date="2017" name="Plant J.">
        <title>Araport11: a complete reannotation of the Arabidopsis thaliana reference genome.</title>
        <authorList>
            <person name="Cheng C.Y."/>
            <person name="Krishnakumar V."/>
            <person name="Chan A.P."/>
            <person name="Thibaud-Nissen F."/>
            <person name="Schobel S."/>
            <person name="Town C.D."/>
        </authorList>
    </citation>
    <scope>GENOME REANNOTATION</scope>
    <source>
        <strain>cv. Columbia</strain>
    </source>
</reference>
<reference key="3">
    <citation type="journal article" date="2003" name="Science">
        <title>Empirical analysis of transcriptional activity in the Arabidopsis genome.</title>
        <authorList>
            <person name="Yamada K."/>
            <person name="Lim J."/>
            <person name="Dale J.M."/>
            <person name="Chen H."/>
            <person name="Shinn P."/>
            <person name="Palm C.J."/>
            <person name="Southwick A.M."/>
            <person name="Wu H.C."/>
            <person name="Kim C.J."/>
            <person name="Nguyen M."/>
            <person name="Pham P.K."/>
            <person name="Cheuk R.F."/>
            <person name="Karlin-Newmann G."/>
            <person name="Liu S.X."/>
            <person name="Lam B."/>
            <person name="Sakano H."/>
            <person name="Wu T."/>
            <person name="Yu G."/>
            <person name="Miranda M."/>
            <person name="Quach H.L."/>
            <person name="Tripp M."/>
            <person name="Chang C.H."/>
            <person name="Lee J.M."/>
            <person name="Toriumi M.J."/>
            <person name="Chan M.M."/>
            <person name="Tang C.C."/>
            <person name="Onodera C.S."/>
            <person name="Deng J.M."/>
            <person name="Akiyama K."/>
            <person name="Ansari Y."/>
            <person name="Arakawa T."/>
            <person name="Banh J."/>
            <person name="Banno F."/>
            <person name="Bowser L."/>
            <person name="Brooks S.Y."/>
            <person name="Carninci P."/>
            <person name="Chao Q."/>
            <person name="Choy N."/>
            <person name="Enju A."/>
            <person name="Goldsmith A.D."/>
            <person name="Gurjal M."/>
            <person name="Hansen N.F."/>
            <person name="Hayashizaki Y."/>
            <person name="Johnson-Hopson C."/>
            <person name="Hsuan V.W."/>
            <person name="Iida K."/>
            <person name="Karnes M."/>
            <person name="Khan S."/>
            <person name="Koesema E."/>
            <person name="Ishida J."/>
            <person name="Jiang P.X."/>
            <person name="Jones T."/>
            <person name="Kawai J."/>
            <person name="Kamiya A."/>
            <person name="Meyers C."/>
            <person name="Nakajima M."/>
            <person name="Narusaka M."/>
            <person name="Seki M."/>
            <person name="Sakurai T."/>
            <person name="Satou M."/>
            <person name="Tamse R."/>
            <person name="Vaysberg M."/>
            <person name="Wallender E.K."/>
            <person name="Wong C."/>
            <person name="Yamamura Y."/>
            <person name="Yuan S."/>
            <person name="Shinozaki K."/>
            <person name="Davis R.W."/>
            <person name="Theologis A."/>
            <person name="Ecker J.R."/>
        </authorList>
    </citation>
    <scope>NUCLEOTIDE SEQUENCE [LARGE SCALE MRNA] OF 461-743</scope>
    <source>
        <strain>cv. Columbia</strain>
    </source>
</reference>
<reference key="4">
    <citation type="submission" date="2006-07" db="EMBL/GenBank/DDBJ databases">
        <title>Large-scale analysis of RIKEN Arabidopsis full-length (RAFL) cDNAs.</title>
        <authorList>
            <person name="Totoki Y."/>
            <person name="Seki M."/>
            <person name="Ishida J."/>
            <person name="Nakajima M."/>
            <person name="Enju A."/>
            <person name="Kamiya A."/>
            <person name="Narusaka M."/>
            <person name="Shin-i T."/>
            <person name="Nakagawa M."/>
            <person name="Sakamoto N."/>
            <person name="Oishi K."/>
            <person name="Kohara Y."/>
            <person name="Kobayashi M."/>
            <person name="Toyoda A."/>
            <person name="Sakaki Y."/>
            <person name="Sakurai T."/>
            <person name="Iida K."/>
            <person name="Akiyama K."/>
            <person name="Satou M."/>
            <person name="Toyoda T."/>
            <person name="Konagaya A."/>
            <person name="Carninci P."/>
            <person name="Kawai J."/>
            <person name="Hayashizaki Y."/>
            <person name="Shinozaki K."/>
        </authorList>
    </citation>
    <scope>NUCLEOTIDE SEQUENCE [LARGE SCALE MRNA] OF 461-743</scope>
    <source>
        <strain>cv. Columbia</strain>
    </source>
</reference>
<reference key="5">
    <citation type="journal article" date="2009" name="J. Proteomics">
        <title>Phosphoproteomic analysis of nuclei-enriched fractions from Arabidopsis thaliana.</title>
        <authorList>
            <person name="Jones A.M.E."/>
            <person name="MacLean D."/>
            <person name="Studholme D.J."/>
            <person name="Serna-Sanz A."/>
            <person name="Andreasson E."/>
            <person name="Rathjen J.P."/>
            <person name="Peck S.C."/>
        </authorList>
    </citation>
    <scope>IDENTIFICATION BY MASS SPECTROMETRY [LARGE SCALE ANALYSIS]</scope>
    <source>
        <strain>cv. Columbia</strain>
    </source>
</reference>
<protein>
    <recommendedName>
        <fullName>Protein VAC14 homolog</fullName>
    </recommendedName>
</protein>
<keyword id="KW-0025">Alternative splicing</keyword>
<keyword id="KW-0963">Cytoplasm</keyword>
<keyword id="KW-0472">Membrane</keyword>
<keyword id="KW-1185">Reference proteome</keyword>
<keyword id="KW-0677">Repeat</keyword>
<keyword id="KW-0926">Vacuole</keyword>
<proteinExistence type="evidence at protein level"/>
<feature type="chain" id="PRO_0000421977" description="Protein VAC14 homolog">
    <location>
        <begin position="1"/>
        <end position="743"/>
    </location>
</feature>
<feature type="repeat" description="HEAT 1">
    <location>
        <begin position="45"/>
        <end position="83"/>
    </location>
</feature>
<feature type="repeat" description="HEAT 2">
    <location>
        <begin position="87"/>
        <end position="124"/>
    </location>
</feature>
<feature type="repeat" description="HEAT 3">
    <location>
        <begin position="128"/>
        <end position="165"/>
    </location>
</feature>
<feature type="repeat" description="HEAT 4">
    <location>
        <begin position="169"/>
        <end position="206"/>
    </location>
</feature>
<feature type="repeat" description="HEAT 5">
    <location>
        <begin position="210"/>
        <end position="247"/>
    </location>
</feature>
<feature type="repeat" description="HEAT 6">
    <location>
        <begin position="251"/>
        <end position="288"/>
    </location>
</feature>
<feature type="repeat" description="HEAT 7">
    <location>
        <begin position="292"/>
        <end position="329"/>
    </location>
</feature>
<feature type="repeat" description="HEAT 8">
    <location>
        <begin position="334"/>
        <end position="371"/>
    </location>
</feature>
<feature type="repeat" description="HEAT 9">
    <location>
        <begin position="375"/>
        <end position="412"/>
    </location>
</feature>
<feature type="repeat" description="HEAT 10">
    <location>
        <begin position="414"/>
        <end position="448"/>
    </location>
</feature>
<feature type="region of interest" description="Disordered" evidence="2">
    <location>
        <begin position="624"/>
        <end position="647"/>
    </location>
</feature>
<feature type="region of interest" description="Disordered" evidence="2">
    <location>
        <begin position="670"/>
        <end position="743"/>
    </location>
</feature>
<feature type="compositionally biased region" description="Low complexity" evidence="2">
    <location>
        <begin position="678"/>
        <end position="688"/>
    </location>
</feature>
<feature type="compositionally biased region" description="Low complexity" evidence="2">
    <location>
        <begin position="697"/>
        <end position="712"/>
    </location>
</feature>
<feature type="compositionally biased region" description="Polar residues" evidence="2">
    <location>
        <begin position="718"/>
        <end position="732"/>
    </location>
</feature>
<feature type="sequence conflict" description="In Ref. 3; AAL87284." evidence="3" ref="3">
    <original>E</original>
    <variation>EQ</variation>
    <location>
        <position position="696"/>
    </location>
</feature>
<dbReference type="EMBL" id="AC006069">
    <property type="protein sequence ID" value="AAD12702.2"/>
    <property type="molecule type" value="Genomic_DNA"/>
</dbReference>
<dbReference type="EMBL" id="CP002685">
    <property type="protein sequence ID" value="AEC05485.1"/>
    <property type="molecule type" value="Genomic_DNA"/>
</dbReference>
<dbReference type="EMBL" id="AY080803">
    <property type="protein sequence ID" value="AAL87284.1"/>
    <property type="molecule type" value="mRNA"/>
</dbReference>
<dbReference type="EMBL" id="AK226840">
    <property type="protein sequence ID" value="BAE98933.1"/>
    <property type="molecule type" value="mRNA"/>
</dbReference>
<dbReference type="PIR" id="H84427">
    <property type="entry name" value="H84427"/>
</dbReference>
<dbReference type="RefSeq" id="NP_565275.1">
    <molecule id="Q9ZU97-1"/>
    <property type="nucleotide sequence ID" value="NM_126230.3"/>
</dbReference>
<dbReference type="SMR" id="Q9ZU97"/>
<dbReference type="BioGRID" id="101">
    <property type="interactions" value="2"/>
</dbReference>
<dbReference type="FunCoup" id="Q9ZU97">
    <property type="interactions" value="4759"/>
</dbReference>
<dbReference type="STRING" id="3702.Q9ZU97"/>
<dbReference type="GlyGen" id="Q9ZU97">
    <property type="glycosylation" value="1 site"/>
</dbReference>
<dbReference type="iPTMnet" id="Q9ZU97"/>
<dbReference type="PaxDb" id="3702-AT2G01690.2"/>
<dbReference type="ProteomicsDB" id="228547">
    <molecule id="Q9ZU97-1"/>
</dbReference>
<dbReference type="EnsemblPlants" id="AT2G01690.1">
    <molecule id="Q9ZU97-1"/>
    <property type="protein sequence ID" value="AT2G01690.1"/>
    <property type="gene ID" value="AT2G01690"/>
</dbReference>
<dbReference type="GeneID" id="814698"/>
<dbReference type="Gramene" id="AT2G01690.1">
    <molecule id="Q9ZU97-1"/>
    <property type="protein sequence ID" value="AT2G01690.1"/>
    <property type="gene ID" value="AT2G01690"/>
</dbReference>
<dbReference type="KEGG" id="ath:AT2G01690"/>
<dbReference type="Araport" id="AT2G01690"/>
<dbReference type="TAIR" id="AT2G01690">
    <property type="gene designation" value="VAC1"/>
</dbReference>
<dbReference type="eggNOG" id="KOG0212">
    <property type="taxonomic scope" value="Eukaryota"/>
</dbReference>
<dbReference type="InParanoid" id="Q9ZU97"/>
<dbReference type="OrthoDB" id="5574975at2759"/>
<dbReference type="PhylomeDB" id="Q9ZU97"/>
<dbReference type="PRO" id="PR:Q9ZU97"/>
<dbReference type="Proteomes" id="UP000006548">
    <property type="component" value="Chromosome 2"/>
</dbReference>
<dbReference type="ExpressionAtlas" id="Q9ZU97">
    <property type="expression patterns" value="baseline and differential"/>
</dbReference>
<dbReference type="GO" id="GO:0070772">
    <property type="term" value="C:PAS complex"/>
    <property type="evidence" value="ECO:0007669"/>
    <property type="project" value="InterPro"/>
</dbReference>
<dbReference type="GO" id="GO:0006661">
    <property type="term" value="P:phosphatidylinositol biosynthetic process"/>
    <property type="evidence" value="ECO:0007669"/>
    <property type="project" value="InterPro"/>
</dbReference>
<dbReference type="FunFam" id="1.25.10.10:FF:000981">
    <property type="entry name" value="ARM repeat superfamily protein"/>
    <property type="match status" value="1"/>
</dbReference>
<dbReference type="FunFam" id="1.25.10.10:FF:001082">
    <property type="entry name" value="ARM repeat superfamily protein"/>
    <property type="match status" value="1"/>
</dbReference>
<dbReference type="FunFam" id="1.25.10.10:FF:000411">
    <property type="entry name" value="protein VAC14 homolog"/>
    <property type="match status" value="1"/>
</dbReference>
<dbReference type="Gene3D" id="1.25.10.10">
    <property type="entry name" value="Leucine-rich Repeat Variant"/>
    <property type="match status" value="2"/>
</dbReference>
<dbReference type="InterPro" id="IPR011989">
    <property type="entry name" value="ARM-like"/>
</dbReference>
<dbReference type="InterPro" id="IPR016024">
    <property type="entry name" value="ARM-type_fold"/>
</dbReference>
<dbReference type="InterPro" id="IPR021133">
    <property type="entry name" value="HEAT_type_2"/>
</dbReference>
<dbReference type="InterPro" id="IPR026825">
    <property type="entry name" value="Vac14"/>
</dbReference>
<dbReference type="InterPro" id="IPR021841">
    <property type="entry name" value="VAC14_Fig4p-bd"/>
</dbReference>
<dbReference type="PANTHER" id="PTHR16023:SF0">
    <property type="entry name" value="PROTEIN VAC14 HOMOLOG"/>
    <property type="match status" value="1"/>
</dbReference>
<dbReference type="PANTHER" id="PTHR16023">
    <property type="entry name" value="TAX1 BINDING PROTEIN-RELATED"/>
    <property type="match status" value="1"/>
</dbReference>
<dbReference type="Pfam" id="PF12755">
    <property type="entry name" value="Vac14_Fab1_bd"/>
    <property type="match status" value="1"/>
</dbReference>
<dbReference type="Pfam" id="PF11916">
    <property type="entry name" value="Vac14_Fig4_bd"/>
    <property type="match status" value="1"/>
</dbReference>
<dbReference type="SUPFAM" id="SSF48371">
    <property type="entry name" value="ARM repeat"/>
    <property type="match status" value="1"/>
</dbReference>
<dbReference type="PROSITE" id="PS50077">
    <property type="entry name" value="HEAT_REPEAT"/>
    <property type="match status" value="1"/>
</dbReference>
<organism>
    <name type="scientific">Arabidopsis thaliana</name>
    <name type="common">Mouse-ear cress</name>
    <dbReference type="NCBI Taxonomy" id="3702"/>
    <lineage>
        <taxon>Eukaryota</taxon>
        <taxon>Viridiplantae</taxon>
        <taxon>Streptophyta</taxon>
        <taxon>Embryophyta</taxon>
        <taxon>Tracheophyta</taxon>
        <taxon>Spermatophyta</taxon>
        <taxon>Magnoliopsida</taxon>
        <taxon>eudicotyledons</taxon>
        <taxon>Gunneridae</taxon>
        <taxon>Pentapetalae</taxon>
        <taxon>rosids</taxon>
        <taxon>malvids</taxon>
        <taxon>Brassicales</taxon>
        <taxon>Brassicaceae</taxon>
        <taxon>Camelineae</taxon>
        <taxon>Arabidopsis</taxon>
    </lineage>
</organism>